<name>RS4_SACI4</name>
<dbReference type="EMBL" id="CP001400">
    <property type="protein sequence ID" value="ACP38787.1"/>
    <property type="molecule type" value="Genomic_DNA"/>
</dbReference>
<dbReference type="RefSeq" id="WP_012712013.1">
    <property type="nucleotide sequence ID" value="NC_012588.1"/>
</dbReference>
<dbReference type="SMR" id="C3MZ03"/>
<dbReference type="KEGG" id="sia:M1425_2046"/>
<dbReference type="HOGENOM" id="CLU_089738_1_1_2"/>
<dbReference type="Proteomes" id="UP000001350">
    <property type="component" value="Chromosome"/>
</dbReference>
<dbReference type="GO" id="GO:0015935">
    <property type="term" value="C:small ribosomal subunit"/>
    <property type="evidence" value="ECO:0007669"/>
    <property type="project" value="InterPro"/>
</dbReference>
<dbReference type="GO" id="GO:0019843">
    <property type="term" value="F:rRNA binding"/>
    <property type="evidence" value="ECO:0007669"/>
    <property type="project" value="UniProtKB-UniRule"/>
</dbReference>
<dbReference type="GO" id="GO:0003735">
    <property type="term" value="F:structural constituent of ribosome"/>
    <property type="evidence" value="ECO:0007669"/>
    <property type="project" value="InterPro"/>
</dbReference>
<dbReference type="GO" id="GO:0042274">
    <property type="term" value="P:ribosomal small subunit biogenesis"/>
    <property type="evidence" value="ECO:0007669"/>
    <property type="project" value="TreeGrafter"/>
</dbReference>
<dbReference type="GO" id="GO:0006412">
    <property type="term" value="P:translation"/>
    <property type="evidence" value="ECO:0007669"/>
    <property type="project" value="UniProtKB-UniRule"/>
</dbReference>
<dbReference type="CDD" id="cd00165">
    <property type="entry name" value="S4"/>
    <property type="match status" value="1"/>
</dbReference>
<dbReference type="FunFam" id="3.10.290.10:FF:000026">
    <property type="entry name" value="30S ribosomal protein S4"/>
    <property type="match status" value="1"/>
</dbReference>
<dbReference type="Gene3D" id="3.10.290.10">
    <property type="entry name" value="RNA-binding S4 domain"/>
    <property type="match status" value="1"/>
</dbReference>
<dbReference type="HAMAP" id="MF_01306_A">
    <property type="entry name" value="Ribosomal_uS4_A"/>
    <property type="match status" value="1"/>
</dbReference>
<dbReference type="InterPro" id="IPR022801">
    <property type="entry name" value="Ribosomal_uS4"/>
</dbReference>
<dbReference type="InterPro" id="IPR022802">
    <property type="entry name" value="Ribosomal_uS4_arc"/>
</dbReference>
<dbReference type="InterPro" id="IPR018079">
    <property type="entry name" value="Ribosomal_uS4_CS"/>
</dbReference>
<dbReference type="InterPro" id="IPR005710">
    <property type="entry name" value="Ribosomal_uS4_euk/arc"/>
</dbReference>
<dbReference type="InterPro" id="IPR001912">
    <property type="entry name" value="Ribosomal_uS4_N"/>
</dbReference>
<dbReference type="InterPro" id="IPR002942">
    <property type="entry name" value="S4_RNA-bd"/>
</dbReference>
<dbReference type="InterPro" id="IPR036986">
    <property type="entry name" value="S4_RNA-bd_sf"/>
</dbReference>
<dbReference type="NCBIfam" id="NF003139">
    <property type="entry name" value="PRK04051.1"/>
    <property type="match status" value="1"/>
</dbReference>
<dbReference type="NCBIfam" id="TIGR01018">
    <property type="entry name" value="uS4_arch"/>
    <property type="match status" value="1"/>
</dbReference>
<dbReference type="PANTHER" id="PTHR11831">
    <property type="entry name" value="30S 40S RIBOSOMAL PROTEIN"/>
    <property type="match status" value="1"/>
</dbReference>
<dbReference type="PANTHER" id="PTHR11831:SF5">
    <property type="entry name" value="40S RIBOSOMAL PROTEIN S9"/>
    <property type="match status" value="1"/>
</dbReference>
<dbReference type="Pfam" id="PF00163">
    <property type="entry name" value="Ribosomal_S4"/>
    <property type="match status" value="1"/>
</dbReference>
<dbReference type="Pfam" id="PF01479">
    <property type="entry name" value="S4"/>
    <property type="match status" value="1"/>
</dbReference>
<dbReference type="SMART" id="SM01390">
    <property type="entry name" value="Ribosomal_S4"/>
    <property type="match status" value="1"/>
</dbReference>
<dbReference type="SMART" id="SM00363">
    <property type="entry name" value="S4"/>
    <property type="match status" value="1"/>
</dbReference>
<dbReference type="SUPFAM" id="SSF55174">
    <property type="entry name" value="Alpha-L RNA-binding motif"/>
    <property type="match status" value="1"/>
</dbReference>
<dbReference type="PROSITE" id="PS00632">
    <property type="entry name" value="RIBOSOMAL_S4"/>
    <property type="match status" value="1"/>
</dbReference>
<dbReference type="PROSITE" id="PS50889">
    <property type="entry name" value="S4"/>
    <property type="match status" value="1"/>
</dbReference>
<feature type="chain" id="PRO_1000214306" description="Small ribosomal subunit protein uS4">
    <location>
        <begin position="1"/>
        <end position="181"/>
    </location>
</feature>
<feature type="domain" description="S4 RNA-binding" evidence="1">
    <location>
        <begin position="104"/>
        <end position="166"/>
    </location>
</feature>
<proteinExistence type="inferred from homology"/>
<evidence type="ECO:0000255" key="1">
    <source>
        <dbReference type="HAMAP-Rule" id="MF_01306"/>
    </source>
</evidence>
<evidence type="ECO:0000305" key="2"/>
<sequence>MGDPKKSRKKWESPGHPWIKERIGYEQELLGKYGLRNKREIWIAQSIIRKFRHQARSLLALPPAERAVREKQLVGKLLKMGLLKRETATVDDILSLTEQDLLERRLQTIVYKKGLANTTYQARQLIIHGHIAVNGKRVTSPGYIVNVDEENLIDYYVTSSFKSRPPVMAQQEGGEAGVKQA</sequence>
<accession>C3MZ03</accession>
<organism>
    <name type="scientific">Saccharolobus islandicus (strain M.14.25 / Kamchatka #1)</name>
    <name type="common">Sulfolobus islandicus</name>
    <dbReference type="NCBI Taxonomy" id="427317"/>
    <lineage>
        <taxon>Archaea</taxon>
        <taxon>Thermoproteota</taxon>
        <taxon>Thermoprotei</taxon>
        <taxon>Sulfolobales</taxon>
        <taxon>Sulfolobaceae</taxon>
        <taxon>Saccharolobus</taxon>
    </lineage>
</organism>
<keyword id="KW-0687">Ribonucleoprotein</keyword>
<keyword id="KW-0689">Ribosomal protein</keyword>
<keyword id="KW-0694">RNA-binding</keyword>
<keyword id="KW-0699">rRNA-binding</keyword>
<comment type="function">
    <text evidence="1">One of the primary rRNA binding proteins, it binds directly to 16S rRNA where it nucleates assembly of the body of the 30S subunit.</text>
</comment>
<comment type="function">
    <text evidence="1">With S5 and S12 plays an important role in translational accuracy.</text>
</comment>
<comment type="subunit">
    <text evidence="1">Part of the 30S ribosomal subunit. Contacts protein S5. The interaction surface between S4 and S5 is involved in control of translational fidelity.</text>
</comment>
<comment type="similarity">
    <text evidence="1">Belongs to the universal ribosomal protein uS4 family.</text>
</comment>
<gene>
    <name evidence="1" type="primary">rps4</name>
    <name type="ordered locus">M1425_2046</name>
</gene>
<reference key="1">
    <citation type="journal article" date="2009" name="Proc. Natl. Acad. Sci. U.S.A.">
        <title>Biogeography of the Sulfolobus islandicus pan-genome.</title>
        <authorList>
            <person name="Reno M.L."/>
            <person name="Held N.L."/>
            <person name="Fields C.J."/>
            <person name="Burke P.V."/>
            <person name="Whitaker R.J."/>
        </authorList>
    </citation>
    <scope>NUCLEOTIDE SEQUENCE [LARGE SCALE GENOMIC DNA]</scope>
    <source>
        <strain>M.14.25 / Kamchatka #1</strain>
    </source>
</reference>
<protein>
    <recommendedName>
        <fullName evidence="1">Small ribosomal subunit protein uS4</fullName>
    </recommendedName>
    <alternativeName>
        <fullName evidence="2">30S ribosomal protein S4</fullName>
    </alternativeName>
</protein>